<organism>
    <name type="scientific">Bradyrhizobium diazoefficiens (strain JCM 10833 / BCRC 13528 / IAM 13628 / NBRC 14792 / USDA 110)</name>
    <dbReference type="NCBI Taxonomy" id="224911"/>
    <lineage>
        <taxon>Bacteria</taxon>
        <taxon>Pseudomonadati</taxon>
        <taxon>Pseudomonadota</taxon>
        <taxon>Alphaproteobacteria</taxon>
        <taxon>Hyphomicrobiales</taxon>
        <taxon>Nitrobacteraceae</taxon>
        <taxon>Bradyrhizobium</taxon>
    </lineage>
</organism>
<gene>
    <name evidence="1" type="primary">pxpA1</name>
    <name type="ordered locus">blr3634</name>
</gene>
<name>PXPA1_BRADU</name>
<protein>
    <recommendedName>
        <fullName evidence="1">5-oxoprolinase subunit A 1</fullName>
        <shortName evidence="1">5-OPase subunit A 1</shortName>
        <ecNumber evidence="1">3.5.2.9</ecNumber>
    </recommendedName>
    <alternativeName>
        <fullName evidence="1">5-oxoprolinase (ATP-hydrolyzing) subunit A 1</fullName>
    </alternativeName>
</protein>
<feature type="chain" id="PRO_0000184995" description="5-oxoprolinase subunit A 1">
    <location>
        <begin position="1"/>
        <end position="255"/>
    </location>
</feature>
<accession>Q89P49</accession>
<evidence type="ECO:0000255" key="1">
    <source>
        <dbReference type="HAMAP-Rule" id="MF_00691"/>
    </source>
</evidence>
<sequence>MKIGINSDMGEGFGNYRICDDEALMSIVSSANVACGFHAGDPIIMDRMVRLAKQKGVEVGAHPGLPDLLGFGRRVIQMDAAELEKHMVYQIGALQAIAANAGHRVTHVSFHAAMGNMVNADPDMADVVARAIATINRDFIVFSQPDAEIVRAARKVGLRTLTLFLADRAYDENGHLVSRKLPNSVVTSTEAVAERVKRFLDSGTVQTIEGKSIKVEARSILIHSDTPGSVNLAGTVRRVIEQGGGEVTPATVLLN</sequence>
<comment type="function">
    <text evidence="1">Catalyzes the cleavage of 5-oxoproline to form L-glutamate coupled to the hydrolysis of ATP to ADP and inorganic phosphate.</text>
</comment>
<comment type="catalytic activity">
    <reaction evidence="1">
        <text>5-oxo-L-proline + ATP + 2 H2O = L-glutamate + ADP + phosphate + H(+)</text>
        <dbReference type="Rhea" id="RHEA:10348"/>
        <dbReference type="ChEBI" id="CHEBI:15377"/>
        <dbReference type="ChEBI" id="CHEBI:15378"/>
        <dbReference type="ChEBI" id="CHEBI:29985"/>
        <dbReference type="ChEBI" id="CHEBI:30616"/>
        <dbReference type="ChEBI" id="CHEBI:43474"/>
        <dbReference type="ChEBI" id="CHEBI:58402"/>
        <dbReference type="ChEBI" id="CHEBI:456216"/>
        <dbReference type="EC" id="3.5.2.9"/>
    </reaction>
</comment>
<comment type="subunit">
    <text evidence="1">Forms a complex composed of PxpA, PxpB and PxpC.</text>
</comment>
<comment type="similarity">
    <text evidence="1">Belongs to the LamB/PxpA family.</text>
</comment>
<proteinExistence type="inferred from homology"/>
<dbReference type="EC" id="3.5.2.9" evidence="1"/>
<dbReference type="EMBL" id="BA000040">
    <property type="protein sequence ID" value="BAC48899.1"/>
    <property type="molecule type" value="Genomic_DNA"/>
</dbReference>
<dbReference type="RefSeq" id="NP_770274.1">
    <property type="nucleotide sequence ID" value="NC_004463.1"/>
</dbReference>
<dbReference type="RefSeq" id="WP_011086415.1">
    <property type="nucleotide sequence ID" value="NC_004463.1"/>
</dbReference>
<dbReference type="SMR" id="Q89P49"/>
<dbReference type="FunCoup" id="Q89P49">
    <property type="interactions" value="53"/>
</dbReference>
<dbReference type="STRING" id="224911.AAV28_15180"/>
<dbReference type="EnsemblBacteria" id="BAC48899">
    <property type="protein sequence ID" value="BAC48899"/>
    <property type="gene ID" value="BAC48899"/>
</dbReference>
<dbReference type="GeneID" id="46490651"/>
<dbReference type="KEGG" id="bja:blr3634"/>
<dbReference type="PATRIC" id="fig|224911.44.peg.3296"/>
<dbReference type="eggNOG" id="COG1540">
    <property type="taxonomic scope" value="Bacteria"/>
</dbReference>
<dbReference type="HOGENOM" id="CLU_069535_0_0_5"/>
<dbReference type="InParanoid" id="Q89P49"/>
<dbReference type="OrthoDB" id="9773478at2"/>
<dbReference type="PhylomeDB" id="Q89P49"/>
<dbReference type="Proteomes" id="UP000002526">
    <property type="component" value="Chromosome"/>
</dbReference>
<dbReference type="GO" id="GO:0017168">
    <property type="term" value="F:5-oxoprolinase (ATP-hydrolyzing) activity"/>
    <property type="evidence" value="ECO:0007669"/>
    <property type="project" value="UniProtKB-UniRule"/>
</dbReference>
<dbReference type="GO" id="GO:0005524">
    <property type="term" value="F:ATP binding"/>
    <property type="evidence" value="ECO:0007669"/>
    <property type="project" value="UniProtKB-UniRule"/>
</dbReference>
<dbReference type="GO" id="GO:0005975">
    <property type="term" value="P:carbohydrate metabolic process"/>
    <property type="evidence" value="ECO:0007669"/>
    <property type="project" value="InterPro"/>
</dbReference>
<dbReference type="CDD" id="cd10787">
    <property type="entry name" value="LamB_YcsF_like"/>
    <property type="match status" value="1"/>
</dbReference>
<dbReference type="Gene3D" id="3.20.20.370">
    <property type="entry name" value="Glycoside hydrolase/deacetylase"/>
    <property type="match status" value="1"/>
</dbReference>
<dbReference type="HAMAP" id="MF_00691">
    <property type="entry name" value="PxpA"/>
    <property type="match status" value="1"/>
</dbReference>
<dbReference type="InterPro" id="IPR011330">
    <property type="entry name" value="Glyco_hydro/deAcase_b/a-brl"/>
</dbReference>
<dbReference type="InterPro" id="IPR005501">
    <property type="entry name" value="LamB/YcsF/PxpA-like"/>
</dbReference>
<dbReference type="NCBIfam" id="NF003814">
    <property type="entry name" value="PRK05406.1-3"/>
    <property type="match status" value="1"/>
</dbReference>
<dbReference type="NCBIfam" id="NF003816">
    <property type="entry name" value="PRK05406.1-5"/>
    <property type="match status" value="1"/>
</dbReference>
<dbReference type="PANTHER" id="PTHR30292:SF0">
    <property type="entry name" value="5-OXOPROLINASE SUBUNIT A"/>
    <property type="match status" value="1"/>
</dbReference>
<dbReference type="PANTHER" id="PTHR30292">
    <property type="entry name" value="UNCHARACTERIZED PROTEIN YBGL-RELATED"/>
    <property type="match status" value="1"/>
</dbReference>
<dbReference type="Pfam" id="PF03746">
    <property type="entry name" value="LamB_YcsF"/>
    <property type="match status" value="1"/>
</dbReference>
<dbReference type="SUPFAM" id="SSF88713">
    <property type="entry name" value="Glycoside hydrolase/deacetylase"/>
    <property type="match status" value="1"/>
</dbReference>
<reference key="1">
    <citation type="journal article" date="2002" name="DNA Res.">
        <title>Complete genomic sequence of nitrogen-fixing symbiotic bacterium Bradyrhizobium japonicum USDA110.</title>
        <authorList>
            <person name="Kaneko T."/>
            <person name="Nakamura Y."/>
            <person name="Sato S."/>
            <person name="Minamisawa K."/>
            <person name="Uchiumi T."/>
            <person name="Sasamoto S."/>
            <person name="Watanabe A."/>
            <person name="Idesawa K."/>
            <person name="Iriguchi M."/>
            <person name="Kawashima K."/>
            <person name="Kohara M."/>
            <person name="Matsumoto M."/>
            <person name="Shimpo S."/>
            <person name="Tsuruoka H."/>
            <person name="Wada T."/>
            <person name="Yamada M."/>
            <person name="Tabata S."/>
        </authorList>
    </citation>
    <scope>NUCLEOTIDE SEQUENCE [LARGE SCALE GENOMIC DNA]</scope>
    <source>
        <strain>JCM 10833 / BCRC 13528 / IAM 13628 / NBRC 14792 / USDA 110</strain>
    </source>
</reference>
<keyword id="KW-0067">ATP-binding</keyword>
<keyword id="KW-0378">Hydrolase</keyword>
<keyword id="KW-0547">Nucleotide-binding</keyword>
<keyword id="KW-1185">Reference proteome</keyword>